<feature type="signal peptide" evidence="1">
    <location>
        <begin position="1"/>
        <end position="28"/>
    </location>
</feature>
<feature type="chain" id="PRO_0000259028" description="Tol-Pal system protein TolB" evidence="1">
    <location>
        <begin position="29"/>
        <end position="434"/>
    </location>
</feature>
<protein>
    <recommendedName>
        <fullName evidence="1">Tol-Pal system protein TolB</fullName>
    </recommendedName>
</protein>
<reference key="1">
    <citation type="journal article" date="2006" name="Nat. Biotechnol.">
        <title>Genome sequence of the ubiquitous hydrocarbon-degrading marine bacterium Alcanivorax borkumensis.</title>
        <authorList>
            <person name="Schneiker S."/>
            <person name="Martins dos Santos V.A.P."/>
            <person name="Bartels D."/>
            <person name="Bekel T."/>
            <person name="Brecht M."/>
            <person name="Buhrmester J."/>
            <person name="Chernikova T.N."/>
            <person name="Denaro R."/>
            <person name="Ferrer M."/>
            <person name="Gertler C."/>
            <person name="Goesmann A."/>
            <person name="Golyshina O.V."/>
            <person name="Kaminski F."/>
            <person name="Khachane A.N."/>
            <person name="Lang S."/>
            <person name="Linke B."/>
            <person name="McHardy A.C."/>
            <person name="Meyer F."/>
            <person name="Nechitaylo T."/>
            <person name="Puehler A."/>
            <person name="Regenhardt D."/>
            <person name="Rupp O."/>
            <person name="Sabirova J.S."/>
            <person name="Selbitschka W."/>
            <person name="Yakimov M.M."/>
            <person name="Timmis K.N."/>
            <person name="Vorhoelter F.-J."/>
            <person name="Weidner S."/>
            <person name="Kaiser O."/>
            <person name="Golyshin P.N."/>
        </authorList>
    </citation>
    <scope>NUCLEOTIDE SEQUENCE [LARGE SCALE GENOMIC DNA]</scope>
    <source>
        <strain>ATCC 700651 / DSM 11573 / NCIMB 13689 / SK2</strain>
    </source>
</reference>
<evidence type="ECO:0000255" key="1">
    <source>
        <dbReference type="HAMAP-Rule" id="MF_00671"/>
    </source>
</evidence>
<evidence type="ECO:0000305" key="2"/>
<proteinExistence type="inferred from homology"/>
<accession>Q0VRJ2</accession>
<comment type="function">
    <text evidence="1">Part of the Tol-Pal system, which plays a role in outer membrane invagination during cell division and is important for maintaining outer membrane integrity.</text>
</comment>
<comment type="subunit">
    <text evidence="1">The Tol-Pal system is composed of five core proteins: the inner membrane proteins TolA, TolQ and TolR, the periplasmic protein TolB and the outer membrane protein Pal. They form a network linking the inner and outer membranes and the peptidoglycan layer.</text>
</comment>
<comment type="subcellular location">
    <subcellularLocation>
        <location evidence="1">Periplasm</location>
    </subcellularLocation>
</comment>
<comment type="similarity">
    <text evidence="1">Belongs to the TolB family.</text>
</comment>
<comment type="sequence caution" evidence="2">
    <conflict type="erroneous initiation">
        <sequence resource="EMBL-CDS" id="CAL16206"/>
    </conflict>
</comment>
<organism>
    <name type="scientific">Alcanivorax borkumensis (strain ATCC 700651 / DSM 11573 / NCIMB 13689 / SK2)</name>
    <dbReference type="NCBI Taxonomy" id="393595"/>
    <lineage>
        <taxon>Bacteria</taxon>
        <taxon>Pseudomonadati</taxon>
        <taxon>Pseudomonadota</taxon>
        <taxon>Gammaproteobacteria</taxon>
        <taxon>Oceanospirillales</taxon>
        <taxon>Alcanivoracaceae</taxon>
        <taxon>Alcanivorax</taxon>
    </lineage>
</organism>
<name>TOLB_ALCBS</name>
<dbReference type="EMBL" id="AM286690">
    <property type="protein sequence ID" value="CAL16206.1"/>
    <property type="status" value="ALT_INIT"/>
    <property type="molecule type" value="Genomic_DNA"/>
</dbReference>
<dbReference type="SMR" id="Q0VRJ2"/>
<dbReference type="STRING" id="393595.ABO_0758"/>
<dbReference type="KEGG" id="abo:ABO_0758"/>
<dbReference type="eggNOG" id="COG0823">
    <property type="taxonomic scope" value="Bacteria"/>
</dbReference>
<dbReference type="HOGENOM" id="CLU_047123_0_0_6"/>
<dbReference type="OrthoDB" id="9802240at2"/>
<dbReference type="Proteomes" id="UP000008871">
    <property type="component" value="Chromosome"/>
</dbReference>
<dbReference type="GO" id="GO:0042597">
    <property type="term" value="C:periplasmic space"/>
    <property type="evidence" value="ECO:0007669"/>
    <property type="project" value="UniProtKB-SubCell"/>
</dbReference>
<dbReference type="GO" id="GO:0051301">
    <property type="term" value="P:cell division"/>
    <property type="evidence" value="ECO:0007669"/>
    <property type="project" value="UniProtKB-UniRule"/>
</dbReference>
<dbReference type="GO" id="GO:0017038">
    <property type="term" value="P:protein import"/>
    <property type="evidence" value="ECO:0007669"/>
    <property type="project" value="InterPro"/>
</dbReference>
<dbReference type="Gene3D" id="2.120.10.30">
    <property type="entry name" value="TolB, C-terminal domain"/>
    <property type="match status" value="1"/>
</dbReference>
<dbReference type="Gene3D" id="3.40.50.10070">
    <property type="entry name" value="TolB, N-terminal domain"/>
    <property type="match status" value="1"/>
</dbReference>
<dbReference type="HAMAP" id="MF_00671">
    <property type="entry name" value="TolB"/>
    <property type="match status" value="1"/>
</dbReference>
<dbReference type="InterPro" id="IPR011042">
    <property type="entry name" value="6-blade_b-propeller_TolB-like"/>
</dbReference>
<dbReference type="InterPro" id="IPR011659">
    <property type="entry name" value="PD40"/>
</dbReference>
<dbReference type="InterPro" id="IPR014167">
    <property type="entry name" value="Tol-Pal_TolB"/>
</dbReference>
<dbReference type="InterPro" id="IPR007195">
    <property type="entry name" value="TolB_N"/>
</dbReference>
<dbReference type="NCBIfam" id="TIGR02800">
    <property type="entry name" value="propeller_TolB"/>
    <property type="match status" value="1"/>
</dbReference>
<dbReference type="PANTHER" id="PTHR36842:SF1">
    <property type="entry name" value="PROTEIN TOLB"/>
    <property type="match status" value="1"/>
</dbReference>
<dbReference type="PANTHER" id="PTHR36842">
    <property type="entry name" value="PROTEIN TOLB HOMOLOG"/>
    <property type="match status" value="1"/>
</dbReference>
<dbReference type="Pfam" id="PF07676">
    <property type="entry name" value="PD40"/>
    <property type="match status" value="4"/>
</dbReference>
<dbReference type="Pfam" id="PF04052">
    <property type="entry name" value="TolB_N"/>
    <property type="match status" value="1"/>
</dbReference>
<dbReference type="SUPFAM" id="SSF52964">
    <property type="entry name" value="TolB, N-terminal domain"/>
    <property type="match status" value="1"/>
</dbReference>
<dbReference type="SUPFAM" id="SSF69304">
    <property type="entry name" value="Tricorn protease N-terminal domain"/>
    <property type="match status" value="1"/>
</dbReference>
<gene>
    <name evidence="1" type="primary">tolB</name>
    <name type="ordered locus">ABO_0758</name>
</gene>
<keyword id="KW-0131">Cell cycle</keyword>
<keyword id="KW-0132">Cell division</keyword>
<keyword id="KW-0574">Periplasm</keyword>
<keyword id="KW-1185">Reference proteome</keyword>
<keyword id="KW-0732">Signal</keyword>
<sequence length="434" mass="48493">MQQTCKRKIWMQISVALVTSLWMISAQAELLIKVTEGRVDAVPIAVVPFDGAKNAEEDVSAIVQADLHRSGQFKPLPPQDMLSRPRNEQEMIYRDFKVLGTEYVITGSMKRQETGGYEVGYALFDVARQKKLMSETYRPPASQLRDVAHAISDRIYEQLTGIPGAFSTKILYVTHNRHDANPYQLQYADADGHRVTTILRSNEPIMSPTWSPDGRKIAYVSFEDQGRPGIYIHNLATTEREKVSSFSGINGAPDWSPDGQHLALTLSRDGNPEIYMLNLSTKVLTRLTNNYGIDTEPRWLPDGEHLVFTSSRSGGPQIYKLNINDKSVRRVSFQGGYNARSDVTPDGRYLVYVHRRNGNYNVGVQDLQRGTFNIVTRTDMDESPSVAPNGSMVIYGTQHGGAGVLEAVSIDGRVKVELPSKEGEVREPAWSPFL</sequence>